<sequence>MAPTAQVAKKGSKKAVKGTKTAXGGKKRNRKRKESYGIYIYKVLKQVHPDTGISSRAMVIMNSFVNDIFERIAGESSRLAQYNKKSTISSREIQTAVRLILPGELAKHAVSEGTKAVTKYTTSK</sequence>
<proteinExistence type="evidence at protein level"/>
<accession>P02289</accession>
<dbReference type="EMBL" id="V01356">
    <property type="protein sequence ID" value="CAA24646.2"/>
    <property type="status" value="ALT_SEQ"/>
    <property type="molecule type" value="Genomic_DNA"/>
</dbReference>
<dbReference type="PIR" id="A02617">
    <property type="entry name" value="HSUR2S"/>
</dbReference>
<dbReference type="RefSeq" id="NP_999710.2">
    <property type="nucleotide sequence ID" value="NM_214545.1"/>
</dbReference>
<dbReference type="FunCoup" id="P02289">
    <property type="interactions" value="1625"/>
</dbReference>
<dbReference type="STRING" id="7668.P02289"/>
<dbReference type="iPTMnet" id="P02289"/>
<dbReference type="GeneID" id="373336"/>
<dbReference type="CTD" id="519934"/>
<dbReference type="eggNOG" id="KOG1744">
    <property type="taxonomic scope" value="Eukaryota"/>
</dbReference>
<dbReference type="HOGENOM" id="CLU_075666_2_1_1"/>
<dbReference type="InParanoid" id="P02289"/>
<dbReference type="Proteomes" id="UP000007110">
    <property type="component" value="Unassembled WGS sequence"/>
</dbReference>
<dbReference type="GO" id="GO:0000786">
    <property type="term" value="C:nucleosome"/>
    <property type="evidence" value="ECO:0007669"/>
    <property type="project" value="UniProtKB-KW"/>
</dbReference>
<dbReference type="GO" id="GO:0005634">
    <property type="term" value="C:nucleus"/>
    <property type="evidence" value="ECO:0007669"/>
    <property type="project" value="UniProtKB-SubCell"/>
</dbReference>
<dbReference type="GO" id="GO:0003677">
    <property type="term" value="F:DNA binding"/>
    <property type="evidence" value="ECO:0000318"/>
    <property type="project" value="GO_Central"/>
</dbReference>
<dbReference type="GO" id="GO:0046982">
    <property type="term" value="F:protein heterodimerization activity"/>
    <property type="evidence" value="ECO:0007669"/>
    <property type="project" value="InterPro"/>
</dbReference>
<dbReference type="GO" id="GO:0030527">
    <property type="term" value="F:structural constituent of chromatin"/>
    <property type="evidence" value="ECO:0007669"/>
    <property type="project" value="InterPro"/>
</dbReference>
<dbReference type="CDD" id="cd22910">
    <property type="entry name" value="HFD_H2B"/>
    <property type="match status" value="1"/>
</dbReference>
<dbReference type="FunFam" id="1.10.20.10:FF:000016">
    <property type="entry name" value="Histone H2B"/>
    <property type="match status" value="1"/>
</dbReference>
<dbReference type="Gene3D" id="1.10.20.10">
    <property type="entry name" value="Histone, subunit A"/>
    <property type="match status" value="1"/>
</dbReference>
<dbReference type="InterPro" id="IPR009072">
    <property type="entry name" value="Histone-fold"/>
</dbReference>
<dbReference type="InterPro" id="IPR007125">
    <property type="entry name" value="Histone_H2A/H2B/H3"/>
</dbReference>
<dbReference type="InterPro" id="IPR000558">
    <property type="entry name" value="Histone_H2B"/>
</dbReference>
<dbReference type="InterPro" id="IPR055333">
    <property type="entry name" value="HISTONE_H2B_site"/>
</dbReference>
<dbReference type="PANTHER" id="PTHR23428">
    <property type="entry name" value="HISTONE H2B"/>
    <property type="match status" value="1"/>
</dbReference>
<dbReference type="Pfam" id="PF00125">
    <property type="entry name" value="Histone"/>
    <property type="match status" value="1"/>
</dbReference>
<dbReference type="PRINTS" id="PR00621">
    <property type="entry name" value="HISTONEH2B"/>
</dbReference>
<dbReference type="SMART" id="SM00427">
    <property type="entry name" value="H2B"/>
    <property type="match status" value="1"/>
</dbReference>
<dbReference type="SUPFAM" id="SSF47113">
    <property type="entry name" value="Histone-fold"/>
    <property type="match status" value="1"/>
</dbReference>
<dbReference type="PROSITE" id="PS00357">
    <property type="entry name" value="HISTONE_H2B"/>
    <property type="match status" value="1"/>
</dbReference>
<name>H2BE_STRPU</name>
<feature type="initiator methionine" description="Removed" evidence="1">
    <location>
        <position position="1"/>
    </location>
</feature>
<feature type="chain" id="PRO_0000071895" description="Histone H2B, embryonic">
    <location>
        <begin position="2"/>
        <end position="124"/>
    </location>
</feature>
<feature type="region of interest" description="Disordered" evidence="2">
    <location>
        <begin position="1"/>
        <end position="31"/>
    </location>
</feature>
<feature type="glycosylation site" description="O-linked (GlcNAc) serine" evidence="1">
    <location>
        <position position="111"/>
    </location>
</feature>
<feature type="cross-link" description="Glycyl lysine isopeptide (Lys-Gly) (interchain with G-Cter in ubiquitin)" evidence="4">
    <location>
        <position position="119"/>
    </location>
</feature>
<protein>
    <recommendedName>
        <fullName>Histone H2B, embryonic</fullName>
    </recommendedName>
</protein>
<evidence type="ECO:0000250" key="1"/>
<evidence type="ECO:0000256" key="2">
    <source>
        <dbReference type="SAM" id="MobiDB-lite"/>
    </source>
</evidence>
<evidence type="ECO:0000305" key="3"/>
<evidence type="ECO:0000305" key="4">
    <source>
    </source>
</evidence>
<reference key="1">
    <citation type="journal article" date="1978" name="Cell">
        <title>The DNA sequence of sea urchin (S. purpuratus) H2A, H2B and H3 histone coding and spacer regions.</title>
        <authorList>
            <person name="Sures I."/>
            <person name="Lowry J."/>
            <person name="Kedes L.H."/>
        </authorList>
    </citation>
    <scope>NUCLEOTIDE SEQUENCE [GENOMIC DNA]</scope>
</reference>
<reference key="2">
    <citation type="journal article" date="1995" name="Dev. Genet.">
        <title>Embryonic regulation of histone ubiquitination in the sea urchin.</title>
        <authorList>
            <person name="Jasinskiene N."/>
            <person name="Jasinskas A."/>
            <person name="Langmore J.P."/>
        </authorList>
    </citation>
    <scope>UBIQUITINATION</scope>
</reference>
<comment type="function">
    <text>Core component of nucleosome. Nucleosomes wrap and compact DNA into chromatin, limiting DNA accessibility to the cellular machineries which require DNA as a template. Histones thereby play a central role in transcription regulation, DNA repair, DNA replication and chromosomal stability. DNA accessibility is regulated via a complex set of post-translational modifications of histones, also called histone code, and nucleosome remodeling.</text>
</comment>
<comment type="subunit">
    <text>The nucleosome is a histone octamer containing two molecules each of H2A, H2B, H3 and H4 assembled in one H3-H4 heterotetramer and two H2A-H2B heterodimers. The octamer wraps approximately 147 bp of DNA.</text>
</comment>
<comment type="subcellular location">
    <subcellularLocation>
        <location>Nucleus</location>
    </subcellularLocation>
    <subcellularLocation>
        <location>Chromosome</location>
    </subcellularLocation>
</comment>
<comment type="PTM">
    <text evidence="1">Monoubiquitination of Lys-119 gives a specific tag for epigenetic transcriptional activation and is also prerequisite for histone H3 'Lys-4' and 'Lys-79' methylation.</text>
</comment>
<comment type="PTM">
    <text evidence="1">GlcNAcylation at Ser-111 promotes monoubiquitination of Lys-119. It fluctuates in response to extracellular glucose, and associates with transcribed genes (By similarity).</text>
</comment>
<comment type="similarity">
    <text evidence="3">Belongs to the histone H2B family.</text>
</comment>
<keyword id="KW-0158">Chromosome</keyword>
<keyword id="KW-0238">DNA-binding</keyword>
<keyword id="KW-0325">Glycoprotein</keyword>
<keyword id="KW-1017">Isopeptide bond</keyword>
<keyword id="KW-0544">Nucleosome core</keyword>
<keyword id="KW-0539">Nucleus</keyword>
<keyword id="KW-1185">Reference proteome</keyword>
<keyword id="KW-0832">Ubl conjugation</keyword>
<organism>
    <name type="scientific">Strongylocentrotus purpuratus</name>
    <name type="common">Purple sea urchin</name>
    <dbReference type="NCBI Taxonomy" id="7668"/>
    <lineage>
        <taxon>Eukaryota</taxon>
        <taxon>Metazoa</taxon>
        <taxon>Echinodermata</taxon>
        <taxon>Eleutherozoa</taxon>
        <taxon>Echinozoa</taxon>
        <taxon>Echinoidea</taxon>
        <taxon>Euechinoidea</taxon>
        <taxon>Echinacea</taxon>
        <taxon>Camarodonta</taxon>
        <taxon>Echinidea</taxon>
        <taxon>Strongylocentrotidae</taxon>
        <taxon>Strongylocentrotus</taxon>
    </lineage>
</organism>